<gene>
    <name evidence="7 9" type="primary">Slc25a3</name>
</gene>
<name>S25A3_MOUSE</name>
<reference key="1">
    <citation type="journal article" date="2005" name="Science">
        <title>The transcriptional landscape of the mammalian genome.</title>
        <authorList>
            <person name="Carninci P."/>
            <person name="Kasukawa T."/>
            <person name="Katayama S."/>
            <person name="Gough J."/>
            <person name="Frith M.C."/>
            <person name="Maeda N."/>
            <person name="Oyama R."/>
            <person name="Ravasi T."/>
            <person name="Lenhard B."/>
            <person name="Wells C."/>
            <person name="Kodzius R."/>
            <person name="Shimokawa K."/>
            <person name="Bajic V.B."/>
            <person name="Brenner S.E."/>
            <person name="Batalov S."/>
            <person name="Forrest A.R."/>
            <person name="Zavolan M."/>
            <person name="Davis M.J."/>
            <person name="Wilming L.G."/>
            <person name="Aidinis V."/>
            <person name="Allen J.E."/>
            <person name="Ambesi-Impiombato A."/>
            <person name="Apweiler R."/>
            <person name="Aturaliya R.N."/>
            <person name="Bailey T.L."/>
            <person name="Bansal M."/>
            <person name="Baxter L."/>
            <person name="Beisel K.W."/>
            <person name="Bersano T."/>
            <person name="Bono H."/>
            <person name="Chalk A.M."/>
            <person name="Chiu K.P."/>
            <person name="Choudhary V."/>
            <person name="Christoffels A."/>
            <person name="Clutterbuck D.R."/>
            <person name="Crowe M.L."/>
            <person name="Dalla E."/>
            <person name="Dalrymple B.P."/>
            <person name="de Bono B."/>
            <person name="Della Gatta G."/>
            <person name="di Bernardo D."/>
            <person name="Down T."/>
            <person name="Engstrom P."/>
            <person name="Fagiolini M."/>
            <person name="Faulkner G."/>
            <person name="Fletcher C.F."/>
            <person name="Fukushima T."/>
            <person name="Furuno M."/>
            <person name="Futaki S."/>
            <person name="Gariboldi M."/>
            <person name="Georgii-Hemming P."/>
            <person name="Gingeras T.R."/>
            <person name="Gojobori T."/>
            <person name="Green R.E."/>
            <person name="Gustincich S."/>
            <person name="Harbers M."/>
            <person name="Hayashi Y."/>
            <person name="Hensch T.K."/>
            <person name="Hirokawa N."/>
            <person name="Hill D."/>
            <person name="Huminiecki L."/>
            <person name="Iacono M."/>
            <person name="Ikeo K."/>
            <person name="Iwama A."/>
            <person name="Ishikawa T."/>
            <person name="Jakt M."/>
            <person name="Kanapin A."/>
            <person name="Katoh M."/>
            <person name="Kawasawa Y."/>
            <person name="Kelso J."/>
            <person name="Kitamura H."/>
            <person name="Kitano H."/>
            <person name="Kollias G."/>
            <person name="Krishnan S.P."/>
            <person name="Kruger A."/>
            <person name="Kummerfeld S.K."/>
            <person name="Kurochkin I.V."/>
            <person name="Lareau L.F."/>
            <person name="Lazarevic D."/>
            <person name="Lipovich L."/>
            <person name="Liu J."/>
            <person name="Liuni S."/>
            <person name="McWilliam S."/>
            <person name="Madan Babu M."/>
            <person name="Madera M."/>
            <person name="Marchionni L."/>
            <person name="Matsuda H."/>
            <person name="Matsuzawa S."/>
            <person name="Miki H."/>
            <person name="Mignone F."/>
            <person name="Miyake S."/>
            <person name="Morris K."/>
            <person name="Mottagui-Tabar S."/>
            <person name="Mulder N."/>
            <person name="Nakano N."/>
            <person name="Nakauchi H."/>
            <person name="Ng P."/>
            <person name="Nilsson R."/>
            <person name="Nishiguchi S."/>
            <person name="Nishikawa S."/>
            <person name="Nori F."/>
            <person name="Ohara O."/>
            <person name="Okazaki Y."/>
            <person name="Orlando V."/>
            <person name="Pang K.C."/>
            <person name="Pavan W.J."/>
            <person name="Pavesi G."/>
            <person name="Pesole G."/>
            <person name="Petrovsky N."/>
            <person name="Piazza S."/>
            <person name="Reed J."/>
            <person name="Reid J.F."/>
            <person name="Ring B.Z."/>
            <person name="Ringwald M."/>
            <person name="Rost B."/>
            <person name="Ruan Y."/>
            <person name="Salzberg S.L."/>
            <person name="Sandelin A."/>
            <person name="Schneider C."/>
            <person name="Schoenbach C."/>
            <person name="Sekiguchi K."/>
            <person name="Semple C.A."/>
            <person name="Seno S."/>
            <person name="Sessa L."/>
            <person name="Sheng Y."/>
            <person name="Shibata Y."/>
            <person name="Shimada H."/>
            <person name="Shimada K."/>
            <person name="Silva D."/>
            <person name="Sinclair B."/>
            <person name="Sperling S."/>
            <person name="Stupka E."/>
            <person name="Sugiura K."/>
            <person name="Sultana R."/>
            <person name="Takenaka Y."/>
            <person name="Taki K."/>
            <person name="Tammoja K."/>
            <person name="Tan S.L."/>
            <person name="Tang S."/>
            <person name="Taylor M.S."/>
            <person name="Tegner J."/>
            <person name="Teichmann S.A."/>
            <person name="Ueda H.R."/>
            <person name="van Nimwegen E."/>
            <person name="Verardo R."/>
            <person name="Wei C.L."/>
            <person name="Yagi K."/>
            <person name="Yamanishi H."/>
            <person name="Zabarovsky E."/>
            <person name="Zhu S."/>
            <person name="Zimmer A."/>
            <person name="Hide W."/>
            <person name="Bult C."/>
            <person name="Grimmond S.M."/>
            <person name="Teasdale R.D."/>
            <person name="Liu E.T."/>
            <person name="Brusic V."/>
            <person name="Quackenbush J."/>
            <person name="Wahlestedt C."/>
            <person name="Mattick J.S."/>
            <person name="Hume D.A."/>
            <person name="Kai C."/>
            <person name="Sasaki D."/>
            <person name="Tomaru Y."/>
            <person name="Fukuda S."/>
            <person name="Kanamori-Katayama M."/>
            <person name="Suzuki M."/>
            <person name="Aoki J."/>
            <person name="Arakawa T."/>
            <person name="Iida J."/>
            <person name="Imamura K."/>
            <person name="Itoh M."/>
            <person name="Kato T."/>
            <person name="Kawaji H."/>
            <person name="Kawagashira N."/>
            <person name="Kawashima T."/>
            <person name="Kojima M."/>
            <person name="Kondo S."/>
            <person name="Konno H."/>
            <person name="Nakano K."/>
            <person name="Ninomiya N."/>
            <person name="Nishio T."/>
            <person name="Okada M."/>
            <person name="Plessy C."/>
            <person name="Shibata K."/>
            <person name="Shiraki T."/>
            <person name="Suzuki S."/>
            <person name="Tagami M."/>
            <person name="Waki K."/>
            <person name="Watahiki A."/>
            <person name="Okamura-Oho Y."/>
            <person name="Suzuki H."/>
            <person name="Kawai J."/>
            <person name="Hayashizaki Y."/>
        </authorList>
    </citation>
    <scope>NUCLEOTIDE SEQUENCE [LARGE SCALE MRNA]</scope>
    <source>
        <strain>C57BL/6J</strain>
        <strain>NOD</strain>
        <tissue>Amnion</tissue>
        <tissue>Bone marrow</tissue>
        <tissue>Ovary</tissue>
        <tissue>Thymus</tissue>
        <tissue>Uterus</tissue>
    </source>
</reference>
<reference key="2">
    <citation type="journal article" date="2004" name="Genome Res.">
        <title>The status, quality, and expansion of the NIH full-length cDNA project: the Mammalian Gene Collection (MGC).</title>
        <authorList>
            <consortium name="The MGC Project Team"/>
        </authorList>
    </citation>
    <scope>NUCLEOTIDE SEQUENCE [LARGE SCALE MRNA]</scope>
</reference>
<reference key="3">
    <citation type="submission" date="2007-04" db="UniProtKB">
        <authorList>
            <person name="Lubec G."/>
            <person name="Kang S.U."/>
        </authorList>
    </citation>
    <scope>PROTEIN SEQUENCE OF 88-94; 97-107; 117-156; 185-196; 202-242; 291-300 AND 337-350</scope>
    <scope>IDENTIFICATION BY MASS SPECTROMETRY</scope>
    <source>
        <strain>C57BL/6J</strain>
        <tissue>Brain</tissue>
    </source>
</reference>
<reference key="4">
    <citation type="journal article" date="2010" name="Cell">
        <title>A tissue-specific atlas of mouse protein phosphorylation and expression.</title>
        <authorList>
            <person name="Huttlin E.L."/>
            <person name="Jedrychowski M.P."/>
            <person name="Elias J.E."/>
            <person name="Goswami T."/>
            <person name="Rad R."/>
            <person name="Beausoleil S.A."/>
            <person name="Villen J."/>
            <person name="Haas W."/>
            <person name="Sowa M.E."/>
            <person name="Gygi S.P."/>
        </authorList>
    </citation>
    <scope>IDENTIFICATION BY MASS SPECTROMETRY [LARGE SCALE ANALYSIS]</scope>
    <source>
        <tissue>Brain</tissue>
        <tissue>Brown adipose tissue</tissue>
        <tissue>Heart</tissue>
        <tissue>Kidney</tissue>
        <tissue>Liver</tissue>
        <tissue>Lung</tissue>
        <tissue>Pancreas</tissue>
        <tissue>Spleen</tissue>
        <tissue>Testis</tissue>
    </source>
</reference>
<reference key="5">
    <citation type="journal article" date="2013" name="Mol. Cell">
        <title>SIRT5-mediated lysine desuccinylation impacts diverse metabolic pathways.</title>
        <authorList>
            <person name="Park J."/>
            <person name="Chen Y."/>
            <person name="Tishkoff D.X."/>
            <person name="Peng C."/>
            <person name="Tan M."/>
            <person name="Dai L."/>
            <person name="Xie Z."/>
            <person name="Zhang Y."/>
            <person name="Zwaans B.M."/>
            <person name="Skinner M.E."/>
            <person name="Lombard D.B."/>
            <person name="Zhao Y."/>
        </authorList>
    </citation>
    <scope>ACETYLATION [LARGE SCALE ANALYSIS] AT LYS-204</scope>
    <scope>IDENTIFICATION BY MASS SPECTROMETRY [LARGE SCALE ANALYSIS]</scope>
    <source>
        <tissue>Embryonic fibroblast</tissue>
    </source>
</reference>
<reference key="6">
    <citation type="journal article" date="2013" name="Proc. Natl. Acad. Sci. U.S.A.">
        <title>Label-free quantitative proteomics of the lysine acetylome in mitochondria identifies substrates of SIRT3 in metabolic pathways.</title>
        <authorList>
            <person name="Rardin M.J."/>
            <person name="Newman J.C."/>
            <person name="Held J.M."/>
            <person name="Cusack M.P."/>
            <person name="Sorensen D.J."/>
            <person name="Li B."/>
            <person name="Schilling B."/>
            <person name="Mooney S.D."/>
            <person name="Kahn C.R."/>
            <person name="Verdin E."/>
            <person name="Gibson B.W."/>
        </authorList>
    </citation>
    <scope>ACETYLATION [LARGE SCALE ANALYSIS] AT LYS-204</scope>
    <scope>IDENTIFICATION BY MASS SPECTROMETRY [LARGE SCALE ANALYSIS]</scope>
    <source>
        <tissue>Liver</tissue>
    </source>
</reference>
<reference key="7">
    <citation type="journal article" date="2018" name="J. Biol. Chem.">
        <title>The mammalian phosphate carrier SLC25A3 is a mitochondrial copper transporter required for cytochrome c oxidase biogenesis.</title>
        <authorList>
            <person name="Boulet A."/>
            <person name="Vest K.E."/>
            <person name="Maynard M.K."/>
            <person name="Gammon M.G."/>
            <person name="Russell A.C."/>
            <person name="Mathews A.T."/>
            <person name="Cole S.E."/>
            <person name="Zhu X."/>
            <person name="Phillips C.B."/>
            <person name="Kwong J.Q."/>
            <person name="Dodani S.C."/>
            <person name="Leary S.C."/>
            <person name="Cobine P.A."/>
        </authorList>
    </citation>
    <scope>FUNCTION</scope>
</reference>
<accession>Q8VEM8</accession>
<accession>Q542V7</accession>
<sequence length="357" mass="39632">MFSSVAHLARANPFNAPHLQLVHDGLSGPRSPPAPPRRSRHLAAAAVEEYSCEFGSMKYYALCGFGGVLSCGLTHTAVVPLDLVKCRMQVDPQKYKGIFNGFSITLKEDGVRGLAKGWAPTLIGYSMQGLCKFGFYEVFKALYSNILGEENTYLWRTSLYLASSASAEFFADIALAPMEAAKVRIQTQPGYANTLREAVPKMYKEEGLNAFYKGVAPLWMRQIPYTMMKFACFERTVEALYKFVVPKPRSECTKAEQLVVTFVAGYIAGVFCAIVSHPADSVVSVLNKEKGSTASQVLQRLGFRGVWKGLFARIIMIGTLTALQWFIYDSVKVYFRLPRPPPPEMPESLKKKLGLTE</sequence>
<proteinExistence type="evidence at protein level"/>
<keyword id="KW-0007">Acetylation</keyword>
<keyword id="KW-0903">Direct protein sequencing</keyword>
<keyword id="KW-0472">Membrane</keyword>
<keyword id="KW-0488">Methylation</keyword>
<keyword id="KW-0496">Mitochondrion</keyword>
<keyword id="KW-0999">Mitochondrion inner membrane</keyword>
<keyword id="KW-0597">Phosphoprotein</keyword>
<keyword id="KW-1185">Reference proteome</keyword>
<keyword id="KW-0677">Repeat</keyword>
<keyword id="KW-0769">Symport</keyword>
<keyword id="KW-0809">Transit peptide</keyword>
<keyword id="KW-0812">Transmembrane</keyword>
<keyword id="KW-1133">Transmembrane helix</keyword>
<keyword id="KW-0813">Transport</keyword>
<comment type="function">
    <text evidence="2 3 4 6">Inorganic ion transporter that transports phosphate or copper ions across the mitochondrial inner membrane into the matrix compartment (By similarity). Mediates proton-coupled symport of phosphate ions necessary for mitochondrial oxidative phosphorylation of ADP to ATP (By similarity). Transports copper ions probably in the form of anionic copper(I) complexes to maintain mitochondrial matrix copper pool and to supply copper for cytochrome C oxidase complex assembly (PubMed:29237729). May also play a role in regulation of the mitochondrial permeability transition pore (mPTP) (By similarity).</text>
</comment>
<comment type="catalytic activity">
    <reaction evidence="2">
        <text>phosphate(in) + H(+)(in) = phosphate(out) + H(+)(out)</text>
        <dbReference type="Rhea" id="RHEA:29939"/>
        <dbReference type="ChEBI" id="CHEBI:15378"/>
        <dbReference type="ChEBI" id="CHEBI:43474"/>
    </reaction>
    <physiologicalReaction direction="right-to-left" evidence="2">
        <dbReference type="Rhea" id="RHEA:29941"/>
    </physiologicalReaction>
</comment>
<comment type="subunit">
    <text evidence="3">Interacts with PPIF; the interaction is impaired by CsA.</text>
</comment>
<comment type="subcellular location">
    <subcellularLocation>
        <location evidence="2">Mitochondrion inner membrane</location>
        <topology evidence="2">Multi-pass membrane protein</topology>
    </subcellularLocation>
</comment>
<comment type="similarity">
    <text evidence="8">Belongs to the mitochondrial carrier (TC 2.A.29) family.</text>
</comment>
<protein>
    <recommendedName>
        <fullName evidence="7">Solute carrier family 25 member 3</fullName>
    </recommendedName>
    <alternativeName>
        <fullName evidence="4">Phosphate carrier protein, mitochondrial</fullName>
    </alternativeName>
    <alternativeName>
        <fullName>Phosphate transport protein</fullName>
        <shortName>PTP</shortName>
    </alternativeName>
</protein>
<evidence type="ECO:0000250" key="1"/>
<evidence type="ECO:0000250" key="2">
    <source>
        <dbReference type="UniProtKB" id="P12234"/>
    </source>
</evidence>
<evidence type="ECO:0000250" key="3">
    <source>
        <dbReference type="UniProtKB" id="P16036"/>
    </source>
</evidence>
<evidence type="ECO:0000250" key="4">
    <source>
        <dbReference type="UniProtKB" id="Q00325"/>
    </source>
</evidence>
<evidence type="ECO:0000255" key="5"/>
<evidence type="ECO:0000269" key="6">
    <source>
    </source>
</evidence>
<evidence type="ECO:0000303" key="7">
    <source>
    </source>
</evidence>
<evidence type="ECO:0000305" key="8"/>
<evidence type="ECO:0000312" key="9">
    <source>
        <dbReference type="MGI" id="MGI:1353498"/>
    </source>
</evidence>
<evidence type="ECO:0007744" key="10">
    <source>
    </source>
</evidence>
<evidence type="ECO:0007744" key="11">
    <source>
    </source>
</evidence>
<dbReference type="EMBL" id="AK077274">
    <property type="protein sequence ID" value="BAC36723.1"/>
    <property type="molecule type" value="mRNA"/>
</dbReference>
<dbReference type="EMBL" id="AK077723">
    <property type="protein sequence ID" value="BAC36982.1"/>
    <property type="molecule type" value="mRNA"/>
</dbReference>
<dbReference type="EMBL" id="AK088013">
    <property type="protein sequence ID" value="BAC40095.1"/>
    <property type="molecule type" value="mRNA"/>
</dbReference>
<dbReference type="EMBL" id="AK150641">
    <property type="protein sequence ID" value="BAE29729.1"/>
    <property type="molecule type" value="mRNA"/>
</dbReference>
<dbReference type="EMBL" id="AK150729">
    <property type="protein sequence ID" value="BAE29806.1"/>
    <property type="molecule type" value="mRNA"/>
</dbReference>
<dbReference type="EMBL" id="AK150870">
    <property type="protein sequence ID" value="BAE29921.1"/>
    <property type="molecule type" value="mRNA"/>
</dbReference>
<dbReference type="EMBL" id="AK151518">
    <property type="protein sequence ID" value="BAE30467.1"/>
    <property type="molecule type" value="mRNA"/>
</dbReference>
<dbReference type="EMBL" id="AK152006">
    <property type="protein sequence ID" value="BAE30870.1"/>
    <property type="molecule type" value="mRNA"/>
</dbReference>
<dbReference type="EMBL" id="AK152292">
    <property type="protein sequence ID" value="BAE31101.1"/>
    <property type="molecule type" value="mRNA"/>
</dbReference>
<dbReference type="EMBL" id="AK152341">
    <property type="protein sequence ID" value="BAE31137.1"/>
    <property type="molecule type" value="mRNA"/>
</dbReference>
<dbReference type="EMBL" id="AK167197">
    <property type="protein sequence ID" value="BAE39327.1"/>
    <property type="molecule type" value="mRNA"/>
</dbReference>
<dbReference type="EMBL" id="AK168580">
    <property type="protein sequence ID" value="BAE40449.1"/>
    <property type="molecule type" value="mRNA"/>
</dbReference>
<dbReference type="EMBL" id="BC018161">
    <property type="protein sequence ID" value="AAH18161.1"/>
    <property type="molecule type" value="mRNA"/>
</dbReference>
<dbReference type="CCDS" id="CCDS24121.1"/>
<dbReference type="RefSeq" id="NP_598429.1">
    <property type="nucleotide sequence ID" value="NM_133668.5"/>
</dbReference>
<dbReference type="SMR" id="Q8VEM8"/>
<dbReference type="BioGRID" id="202142">
    <property type="interactions" value="51"/>
</dbReference>
<dbReference type="DIP" id="DIP-32038N"/>
<dbReference type="FunCoup" id="Q8VEM8">
    <property type="interactions" value="2148"/>
</dbReference>
<dbReference type="IntAct" id="Q8VEM8">
    <property type="interactions" value="13"/>
</dbReference>
<dbReference type="MINT" id="Q8VEM8"/>
<dbReference type="STRING" id="10090.ENSMUSP00000075987"/>
<dbReference type="TCDB" id="2.A.29.4.5">
    <property type="family name" value="the mitochondrial carrier (mc) family"/>
</dbReference>
<dbReference type="GlyGen" id="Q8VEM8">
    <property type="glycosylation" value="1 site, 1 O-linked glycan (1 site)"/>
</dbReference>
<dbReference type="iPTMnet" id="Q8VEM8"/>
<dbReference type="PhosphoSitePlus" id="Q8VEM8"/>
<dbReference type="SwissPalm" id="Q8VEM8"/>
<dbReference type="jPOST" id="Q8VEM8"/>
<dbReference type="PaxDb" id="10090-ENSMUSP00000075987"/>
<dbReference type="PeptideAtlas" id="Q8VEM8"/>
<dbReference type="ProteomicsDB" id="291435"/>
<dbReference type="Pumba" id="Q8VEM8"/>
<dbReference type="TopDownProteomics" id="Q8VEM8"/>
<dbReference type="Antibodypedia" id="30219">
    <property type="antibodies" value="52 antibodies from 17 providers"/>
</dbReference>
<dbReference type="DNASU" id="18674"/>
<dbReference type="Ensembl" id="ENSMUST00000076694.13">
    <property type="protein sequence ID" value="ENSMUSP00000075987.7"/>
    <property type="gene ID" value="ENSMUSG00000061904.13"/>
</dbReference>
<dbReference type="Ensembl" id="ENSMUST00000164505.2">
    <property type="protein sequence ID" value="ENSMUSP00000132480.2"/>
    <property type="gene ID" value="ENSMUSG00000061904.13"/>
</dbReference>
<dbReference type="GeneID" id="18674"/>
<dbReference type="KEGG" id="mmu:18674"/>
<dbReference type="UCSC" id="uc007gtn.1">
    <property type="organism name" value="mouse"/>
</dbReference>
<dbReference type="AGR" id="MGI:1353498"/>
<dbReference type="CTD" id="5250"/>
<dbReference type="MGI" id="MGI:1353498">
    <property type="gene designation" value="Slc25a3"/>
</dbReference>
<dbReference type="VEuPathDB" id="HostDB:ENSMUSG00000061904"/>
<dbReference type="eggNOG" id="KOG0767">
    <property type="taxonomic scope" value="Eukaryota"/>
</dbReference>
<dbReference type="GeneTree" id="ENSGT00390000008708"/>
<dbReference type="HOGENOM" id="CLU_039456_3_1_1"/>
<dbReference type="InParanoid" id="Q8VEM8"/>
<dbReference type="OMA" id="YKGAIWL"/>
<dbReference type="OrthoDB" id="427452at2759"/>
<dbReference type="PhylomeDB" id="Q8VEM8"/>
<dbReference type="TreeFam" id="TF314119"/>
<dbReference type="BioGRID-ORCS" id="18674">
    <property type="hits" value="23 hits in 60 CRISPR screens"/>
</dbReference>
<dbReference type="CD-CODE" id="CE726F99">
    <property type="entry name" value="Postsynaptic density"/>
</dbReference>
<dbReference type="ChiTaRS" id="Slc25a3">
    <property type="organism name" value="mouse"/>
</dbReference>
<dbReference type="PRO" id="PR:Q8VEM8"/>
<dbReference type="Proteomes" id="UP000000589">
    <property type="component" value="Chromosome 10"/>
</dbReference>
<dbReference type="RNAct" id="Q8VEM8">
    <property type="molecule type" value="protein"/>
</dbReference>
<dbReference type="Bgee" id="ENSMUSG00000061904">
    <property type="expression patterns" value="Expressed in hindlimb stylopod muscle and 222 other cell types or tissues"/>
</dbReference>
<dbReference type="ExpressionAtlas" id="Q8VEM8">
    <property type="expression patterns" value="baseline and differential"/>
</dbReference>
<dbReference type="GO" id="GO:0005743">
    <property type="term" value="C:mitochondrial inner membrane"/>
    <property type="evidence" value="ECO:0007005"/>
    <property type="project" value="MGI"/>
</dbReference>
<dbReference type="GO" id="GO:0005739">
    <property type="term" value="C:mitochondrion"/>
    <property type="evidence" value="ECO:0007005"/>
    <property type="project" value="MGI"/>
</dbReference>
<dbReference type="GO" id="GO:0043209">
    <property type="term" value="C:myelin sheath"/>
    <property type="evidence" value="ECO:0007005"/>
    <property type="project" value="UniProtKB"/>
</dbReference>
<dbReference type="GO" id="GO:0005315">
    <property type="term" value="F:phosphate transmembrane transporter activity"/>
    <property type="evidence" value="ECO:0007669"/>
    <property type="project" value="InterPro"/>
</dbReference>
<dbReference type="GO" id="GO:0015317">
    <property type="term" value="F:phosphate:proton symporter activity"/>
    <property type="evidence" value="ECO:0000250"/>
    <property type="project" value="UniProtKB"/>
</dbReference>
<dbReference type="GO" id="GO:0044877">
    <property type="term" value="F:protein-containing complex binding"/>
    <property type="evidence" value="ECO:0000266"/>
    <property type="project" value="MGI"/>
</dbReference>
<dbReference type="GO" id="GO:1990547">
    <property type="term" value="P:mitochondrial phosphate ion transmembrane transport"/>
    <property type="evidence" value="ECO:0007669"/>
    <property type="project" value="InterPro"/>
</dbReference>
<dbReference type="FunFam" id="1.50.40.10:FF:000005">
    <property type="entry name" value="Mitochondrial phosphate carrier protein 2"/>
    <property type="match status" value="1"/>
</dbReference>
<dbReference type="Gene3D" id="1.50.40.10">
    <property type="entry name" value="Mitochondrial carrier domain"/>
    <property type="match status" value="1"/>
</dbReference>
<dbReference type="InterPro" id="IPR018108">
    <property type="entry name" value="Mitochondrial_sb/sol_carrier"/>
</dbReference>
<dbReference type="InterPro" id="IPR023395">
    <property type="entry name" value="Mt_carrier_dom_sf"/>
</dbReference>
<dbReference type="InterPro" id="IPR044677">
    <property type="entry name" value="SLC25A3/Pic2/Mir1-like"/>
</dbReference>
<dbReference type="PANTHER" id="PTHR45671">
    <property type="entry name" value="SOLUTE CARRIER FAMILY 25 (MITOCHONDRIAL CARRIER PHOSPHATE CARRIER), MEMBER 3, LIKE-RELATED-RELATED"/>
    <property type="match status" value="1"/>
</dbReference>
<dbReference type="PANTHER" id="PTHR45671:SF10">
    <property type="entry name" value="SOLUTE CARRIER FAMILY 25 MEMBER 3"/>
    <property type="match status" value="1"/>
</dbReference>
<dbReference type="Pfam" id="PF00153">
    <property type="entry name" value="Mito_carr"/>
    <property type="match status" value="3"/>
</dbReference>
<dbReference type="SUPFAM" id="SSF103506">
    <property type="entry name" value="Mitochondrial carrier"/>
    <property type="match status" value="1"/>
</dbReference>
<dbReference type="PROSITE" id="PS50920">
    <property type="entry name" value="SOLCAR"/>
    <property type="match status" value="3"/>
</dbReference>
<organism>
    <name type="scientific">Mus musculus</name>
    <name type="common">Mouse</name>
    <dbReference type="NCBI Taxonomy" id="10090"/>
    <lineage>
        <taxon>Eukaryota</taxon>
        <taxon>Metazoa</taxon>
        <taxon>Chordata</taxon>
        <taxon>Craniata</taxon>
        <taxon>Vertebrata</taxon>
        <taxon>Euteleostomi</taxon>
        <taxon>Mammalia</taxon>
        <taxon>Eutheria</taxon>
        <taxon>Euarchontoglires</taxon>
        <taxon>Glires</taxon>
        <taxon>Rodentia</taxon>
        <taxon>Myomorpha</taxon>
        <taxon>Muroidea</taxon>
        <taxon>Muridae</taxon>
        <taxon>Murinae</taxon>
        <taxon>Mus</taxon>
        <taxon>Mus</taxon>
    </lineage>
</organism>
<feature type="transit peptide" description="Mitochondrion" evidence="1">
    <location>
        <begin position="1"/>
        <end position="45"/>
    </location>
</feature>
<feature type="chain" id="PRO_0000019257" description="Solute carrier family 25 member 3">
    <location>
        <begin position="46"/>
        <end position="357"/>
    </location>
</feature>
<feature type="topological domain" description="Mitochondrial intermembrane" evidence="5">
    <location>
        <begin position="46"/>
        <end position="58"/>
    </location>
</feature>
<feature type="transmembrane region" description="Helical; Name=1" evidence="5">
    <location>
        <begin position="59"/>
        <end position="81"/>
    </location>
</feature>
<feature type="topological domain" description="Mitochondrial matrix" evidence="5">
    <location>
        <begin position="82"/>
        <end position="116"/>
    </location>
</feature>
<feature type="transmembrane region" description="Helical; Name=2" evidence="5">
    <location>
        <begin position="117"/>
        <end position="136"/>
    </location>
</feature>
<feature type="topological domain" description="Mitochondrial intermembrane" evidence="5">
    <location>
        <begin position="137"/>
        <end position="156"/>
    </location>
</feature>
<feature type="transmembrane region" description="Helical; Name=3" evidence="5">
    <location>
        <begin position="157"/>
        <end position="178"/>
    </location>
</feature>
<feature type="topological domain" description="Mitochondrial matrix" evidence="5">
    <location>
        <begin position="179"/>
        <end position="213"/>
    </location>
</feature>
<feature type="transmembrane region" description="Helical; Name=4" evidence="5">
    <location>
        <begin position="214"/>
        <end position="233"/>
    </location>
</feature>
<feature type="topological domain" description="Mitochondrial intermembrane" evidence="5">
    <location>
        <begin position="234"/>
        <end position="256"/>
    </location>
</feature>
<feature type="transmembrane region" description="Helical; Name=5" evidence="5">
    <location>
        <begin position="257"/>
        <end position="279"/>
    </location>
</feature>
<feature type="topological domain" description="Mitochondrial matrix" evidence="5">
    <location>
        <begin position="280"/>
        <end position="309"/>
    </location>
</feature>
<feature type="transmembrane region" description="Helical; Name=6" evidence="5">
    <location>
        <begin position="310"/>
        <end position="328"/>
    </location>
</feature>
<feature type="topological domain" description="Mitochondrial intermembrane" evidence="5">
    <location>
        <begin position="329"/>
        <end position="357"/>
    </location>
</feature>
<feature type="repeat" description="Solcar 1">
    <location>
        <begin position="58"/>
        <end position="142"/>
    </location>
</feature>
<feature type="repeat" description="Solcar 2">
    <location>
        <begin position="155"/>
        <end position="239"/>
    </location>
</feature>
<feature type="repeat" description="Solcar 3">
    <location>
        <begin position="256"/>
        <end position="334"/>
    </location>
</feature>
<feature type="modified residue" description="N6-acetyllysine" evidence="4">
    <location>
        <position position="94"/>
    </location>
</feature>
<feature type="modified residue" description="N6-methyllysine" evidence="4">
    <location>
        <position position="107"/>
    </location>
</feature>
<feature type="modified residue" description="Phosphotyrosine" evidence="4">
    <location>
        <position position="191"/>
    </location>
</feature>
<feature type="modified residue" description="N6-acetyllysine" evidence="10 11">
    <location>
        <position position="204"/>
    </location>
</feature>